<evidence type="ECO:0000255" key="1">
    <source>
        <dbReference type="HAMAP-Rule" id="MF_01603"/>
    </source>
</evidence>
<proteinExistence type="inferred from homology"/>
<dbReference type="EC" id="2.7.1.167" evidence="1"/>
<dbReference type="EC" id="2.7.7.70" evidence="1"/>
<dbReference type="EMBL" id="AE017180">
    <property type="protein sequence ID" value="AAR35461.1"/>
    <property type="molecule type" value="Genomic_DNA"/>
</dbReference>
<dbReference type="RefSeq" id="NP_953134.1">
    <property type="nucleotide sequence ID" value="NC_002939.5"/>
</dbReference>
<dbReference type="RefSeq" id="WP_010942727.1">
    <property type="nucleotide sequence ID" value="NC_002939.5"/>
</dbReference>
<dbReference type="SMR" id="Q74BF6"/>
<dbReference type="FunCoup" id="Q74BF6">
    <property type="interactions" value="318"/>
</dbReference>
<dbReference type="STRING" id="243231.GSU2085"/>
<dbReference type="EnsemblBacteria" id="AAR35461">
    <property type="protein sequence ID" value="AAR35461"/>
    <property type="gene ID" value="GSU2085"/>
</dbReference>
<dbReference type="KEGG" id="gsu:GSU2085"/>
<dbReference type="PATRIC" id="fig|243231.5.peg.2121"/>
<dbReference type="eggNOG" id="COG0615">
    <property type="taxonomic scope" value="Bacteria"/>
</dbReference>
<dbReference type="eggNOG" id="COG2870">
    <property type="taxonomic scope" value="Bacteria"/>
</dbReference>
<dbReference type="HOGENOM" id="CLU_021150_2_1_7"/>
<dbReference type="InParanoid" id="Q74BF6"/>
<dbReference type="OrthoDB" id="9802794at2"/>
<dbReference type="UniPathway" id="UPA00356">
    <property type="reaction ID" value="UER00437"/>
</dbReference>
<dbReference type="UniPathway" id="UPA00356">
    <property type="reaction ID" value="UER00439"/>
</dbReference>
<dbReference type="Proteomes" id="UP000000577">
    <property type="component" value="Chromosome"/>
</dbReference>
<dbReference type="GO" id="GO:0005829">
    <property type="term" value="C:cytosol"/>
    <property type="evidence" value="ECO:0000318"/>
    <property type="project" value="GO_Central"/>
</dbReference>
<dbReference type="GO" id="GO:0005524">
    <property type="term" value="F:ATP binding"/>
    <property type="evidence" value="ECO:0007669"/>
    <property type="project" value="UniProtKB-UniRule"/>
</dbReference>
<dbReference type="GO" id="GO:0033785">
    <property type="term" value="F:heptose 7-phosphate kinase activity"/>
    <property type="evidence" value="ECO:0000318"/>
    <property type="project" value="GO_Central"/>
</dbReference>
<dbReference type="GO" id="GO:0033786">
    <property type="term" value="F:heptose-1-phosphate adenylyltransferase activity"/>
    <property type="evidence" value="ECO:0000318"/>
    <property type="project" value="GO_Central"/>
</dbReference>
<dbReference type="GO" id="GO:0016773">
    <property type="term" value="F:phosphotransferase activity, alcohol group as acceptor"/>
    <property type="evidence" value="ECO:0007669"/>
    <property type="project" value="InterPro"/>
</dbReference>
<dbReference type="GO" id="GO:0097171">
    <property type="term" value="P:ADP-L-glycero-beta-D-manno-heptose biosynthetic process"/>
    <property type="evidence" value="ECO:0007669"/>
    <property type="project" value="UniProtKB-UniPathway"/>
</dbReference>
<dbReference type="CDD" id="cd01172">
    <property type="entry name" value="RfaE_like"/>
    <property type="match status" value="1"/>
</dbReference>
<dbReference type="FunFam" id="3.40.1190.20:FF:000002">
    <property type="entry name" value="Bifunctional protein HldE"/>
    <property type="match status" value="1"/>
</dbReference>
<dbReference type="Gene3D" id="3.40.1190.20">
    <property type="match status" value="1"/>
</dbReference>
<dbReference type="Gene3D" id="3.40.50.620">
    <property type="entry name" value="HUPs"/>
    <property type="match status" value="1"/>
</dbReference>
<dbReference type="HAMAP" id="MF_01603">
    <property type="entry name" value="HldE"/>
    <property type="match status" value="1"/>
</dbReference>
<dbReference type="InterPro" id="IPR023030">
    <property type="entry name" value="Bifunc_HldE"/>
</dbReference>
<dbReference type="InterPro" id="IPR002173">
    <property type="entry name" value="Carboh/pur_kinase_PfkB_CS"/>
</dbReference>
<dbReference type="InterPro" id="IPR004821">
    <property type="entry name" value="Cyt_trans-like"/>
</dbReference>
<dbReference type="InterPro" id="IPR011611">
    <property type="entry name" value="PfkB_dom"/>
</dbReference>
<dbReference type="InterPro" id="IPR011913">
    <property type="entry name" value="RfaE_dom_I"/>
</dbReference>
<dbReference type="InterPro" id="IPR011914">
    <property type="entry name" value="RfaE_dom_II"/>
</dbReference>
<dbReference type="InterPro" id="IPR029056">
    <property type="entry name" value="Ribokinase-like"/>
</dbReference>
<dbReference type="InterPro" id="IPR014729">
    <property type="entry name" value="Rossmann-like_a/b/a_fold"/>
</dbReference>
<dbReference type="NCBIfam" id="TIGR00125">
    <property type="entry name" value="cyt_tran_rel"/>
    <property type="match status" value="1"/>
</dbReference>
<dbReference type="NCBIfam" id="TIGR02198">
    <property type="entry name" value="rfaE_dom_I"/>
    <property type="match status" value="1"/>
</dbReference>
<dbReference type="NCBIfam" id="TIGR02199">
    <property type="entry name" value="rfaE_dom_II"/>
    <property type="match status" value="1"/>
</dbReference>
<dbReference type="PANTHER" id="PTHR46969">
    <property type="entry name" value="BIFUNCTIONAL PROTEIN HLDE"/>
    <property type="match status" value="1"/>
</dbReference>
<dbReference type="PANTHER" id="PTHR46969:SF1">
    <property type="entry name" value="BIFUNCTIONAL PROTEIN HLDE"/>
    <property type="match status" value="1"/>
</dbReference>
<dbReference type="Pfam" id="PF01467">
    <property type="entry name" value="CTP_transf_like"/>
    <property type="match status" value="1"/>
</dbReference>
<dbReference type="Pfam" id="PF00294">
    <property type="entry name" value="PfkB"/>
    <property type="match status" value="1"/>
</dbReference>
<dbReference type="SUPFAM" id="SSF52374">
    <property type="entry name" value="Nucleotidylyl transferase"/>
    <property type="match status" value="1"/>
</dbReference>
<dbReference type="SUPFAM" id="SSF53613">
    <property type="entry name" value="Ribokinase-like"/>
    <property type="match status" value="1"/>
</dbReference>
<dbReference type="PROSITE" id="PS00583">
    <property type="entry name" value="PFKB_KINASES_1"/>
    <property type="match status" value="1"/>
</dbReference>
<sequence length="490" mass="52359">MERKNVESLFAHAGAINALVIGDLMLDQYLWGKAERISPEAPVQVVDVTREEIRIGGAGNVANNLVALGCRVSVASVVGGDENGTILLHAFSGKGIDVTGIVEDPSRTTSRKTRVLASNQQIVRIDRESRDEIGPDNERRIVDYLNAHGDRFNVILVSDYLKGVLTPTLLAEVIAFARKREIPVVVDPKGSDYAKYRGATVLTPNRKEAEAASGIAIRDDESLCRAGERLLETADLTALVITRSEEGMSLFLRGGQVVHIPTYAREVFDVTGAGDTVLAVLGMALAGGVGFADGARLANVAAGVAVGKVGTSTVSPAEIVGSLGFQHGEGDAKVKNLDVLAGIIAAEKAQGKRVVFTNGCFDLLHVGHVKYLQKARSFGDLLVLGLNSDASIRRLKGEKRPLIGQEERAHILAALDCIDYVVVFDEDTPLNLIETLRPAVLVKGGDYTLDGVVGREVVESYGGRVELVAFVDGRSTTNIIEKILKAYGEE</sequence>
<accession>Q74BF6</accession>
<feature type="chain" id="PRO_0000080110" description="Bifunctional protein HldE">
    <location>
        <begin position="1"/>
        <end position="490"/>
    </location>
</feature>
<feature type="region of interest" description="Ribokinase">
    <location>
        <begin position="1"/>
        <end position="330"/>
    </location>
</feature>
<feature type="region of interest" description="Cytidylyltransferase">
    <location>
        <begin position="356"/>
        <end position="490"/>
    </location>
</feature>
<feature type="active site" evidence="1">
    <location>
        <position position="275"/>
    </location>
</feature>
<feature type="binding site" evidence="1">
    <location>
        <begin position="205"/>
        <end position="208"/>
    </location>
    <ligand>
        <name>ATP</name>
        <dbReference type="ChEBI" id="CHEBI:30616"/>
    </ligand>
</feature>
<gene>
    <name evidence="1" type="primary">hldE</name>
    <name type="synonym">rfaE</name>
    <name type="ordered locus">GSU2085</name>
</gene>
<organism>
    <name type="scientific">Geobacter sulfurreducens (strain ATCC 51573 / DSM 12127 / PCA)</name>
    <dbReference type="NCBI Taxonomy" id="243231"/>
    <lineage>
        <taxon>Bacteria</taxon>
        <taxon>Pseudomonadati</taxon>
        <taxon>Thermodesulfobacteriota</taxon>
        <taxon>Desulfuromonadia</taxon>
        <taxon>Geobacterales</taxon>
        <taxon>Geobacteraceae</taxon>
        <taxon>Geobacter</taxon>
    </lineage>
</organism>
<reference key="1">
    <citation type="journal article" date="2003" name="Science">
        <title>Genome of Geobacter sulfurreducens: metal reduction in subsurface environments.</title>
        <authorList>
            <person name="Methe B.A."/>
            <person name="Nelson K.E."/>
            <person name="Eisen J.A."/>
            <person name="Paulsen I.T."/>
            <person name="Nelson W.C."/>
            <person name="Heidelberg J.F."/>
            <person name="Wu D."/>
            <person name="Wu M."/>
            <person name="Ward N.L."/>
            <person name="Beanan M.J."/>
            <person name="Dodson R.J."/>
            <person name="Madupu R."/>
            <person name="Brinkac L.M."/>
            <person name="Daugherty S.C."/>
            <person name="DeBoy R.T."/>
            <person name="Durkin A.S."/>
            <person name="Gwinn M.L."/>
            <person name="Kolonay J.F."/>
            <person name="Sullivan S.A."/>
            <person name="Haft D.H."/>
            <person name="Selengut J."/>
            <person name="Davidsen T.M."/>
            <person name="Zafar N."/>
            <person name="White O."/>
            <person name="Tran B."/>
            <person name="Romero C."/>
            <person name="Forberger H.A."/>
            <person name="Weidman J.F."/>
            <person name="Khouri H.M."/>
            <person name="Feldblyum T.V."/>
            <person name="Utterback T.R."/>
            <person name="Van Aken S.E."/>
            <person name="Lovley D.R."/>
            <person name="Fraser C.M."/>
        </authorList>
    </citation>
    <scope>NUCLEOTIDE SEQUENCE [LARGE SCALE GENOMIC DNA]</scope>
    <source>
        <strain>ATCC 51573 / DSM 12127 / PCA</strain>
    </source>
</reference>
<keyword id="KW-0067">ATP-binding</keyword>
<keyword id="KW-0119">Carbohydrate metabolism</keyword>
<keyword id="KW-0418">Kinase</keyword>
<keyword id="KW-0511">Multifunctional enzyme</keyword>
<keyword id="KW-0547">Nucleotide-binding</keyword>
<keyword id="KW-0548">Nucleotidyltransferase</keyword>
<keyword id="KW-1185">Reference proteome</keyword>
<keyword id="KW-0808">Transferase</keyword>
<comment type="function">
    <text evidence="1">Catalyzes the phosphorylation of D-glycero-D-manno-heptose 7-phosphate at the C-1 position to selectively form D-glycero-beta-D-manno-heptose-1,7-bisphosphate.</text>
</comment>
<comment type="function">
    <text evidence="1">Catalyzes the ADP transfer from ATP to D-glycero-beta-D-manno-heptose 1-phosphate, yielding ADP-D-glycero-beta-D-manno-heptose.</text>
</comment>
<comment type="catalytic activity">
    <reaction evidence="1">
        <text>D-glycero-beta-D-manno-heptose 7-phosphate + ATP = D-glycero-beta-D-manno-heptose 1,7-bisphosphate + ADP + H(+)</text>
        <dbReference type="Rhea" id="RHEA:27473"/>
        <dbReference type="ChEBI" id="CHEBI:15378"/>
        <dbReference type="ChEBI" id="CHEBI:30616"/>
        <dbReference type="ChEBI" id="CHEBI:60204"/>
        <dbReference type="ChEBI" id="CHEBI:60208"/>
        <dbReference type="ChEBI" id="CHEBI:456216"/>
        <dbReference type="EC" id="2.7.1.167"/>
    </reaction>
</comment>
<comment type="catalytic activity">
    <reaction evidence="1">
        <text>D-glycero-beta-D-manno-heptose 1-phosphate + ATP + H(+) = ADP-D-glycero-beta-D-manno-heptose + diphosphate</text>
        <dbReference type="Rhea" id="RHEA:27465"/>
        <dbReference type="ChEBI" id="CHEBI:15378"/>
        <dbReference type="ChEBI" id="CHEBI:30616"/>
        <dbReference type="ChEBI" id="CHEBI:33019"/>
        <dbReference type="ChEBI" id="CHEBI:59967"/>
        <dbReference type="ChEBI" id="CHEBI:61593"/>
        <dbReference type="EC" id="2.7.7.70"/>
    </reaction>
</comment>
<comment type="pathway">
    <text evidence="1">Nucleotide-sugar biosynthesis; ADP-L-glycero-beta-D-manno-heptose biosynthesis; ADP-L-glycero-beta-D-manno-heptose from D-glycero-beta-D-manno-heptose 7-phosphate: step 1/4.</text>
</comment>
<comment type="pathway">
    <text evidence="1">Nucleotide-sugar biosynthesis; ADP-L-glycero-beta-D-manno-heptose biosynthesis; ADP-L-glycero-beta-D-manno-heptose from D-glycero-beta-D-manno-heptose 7-phosphate: step 3/4.</text>
</comment>
<comment type="subunit">
    <text evidence="1">Homodimer.</text>
</comment>
<comment type="similarity">
    <text evidence="1">In the N-terminal section; belongs to the carbohydrate kinase PfkB family.</text>
</comment>
<comment type="similarity">
    <text evidence="1">In the C-terminal section; belongs to the cytidylyltransferase family.</text>
</comment>
<name>HLDE_GEOSL</name>
<protein>
    <recommendedName>
        <fullName evidence="1">Bifunctional protein HldE</fullName>
    </recommendedName>
    <domain>
        <recommendedName>
            <fullName evidence="1">D-beta-D-heptose 7-phosphate kinase</fullName>
            <ecNumber evidence="1">2.7.1.167</ecNumber>
        </recommendedName>
        <alternativeName>
            <fullName evidence="1">D-beta-D-heptose 7-phosphotransferase</fullName>
        </alternativeName>
        <alternativeName>
            <fullName evidence="1">D-glycero-beta-D-manno-heptose-7-phosphate kinase</fullName>
        </alternativeName>
    </domain>
    <domain>
        <recommendedName>
            <fullName evidence="1">D-beta-D-heptose 1-phosphate adenylyltransferase</fullName>
            <ecNumber evidence="1">2.7.7.70</ecNumber>
        </recommendedName>
        <alternativeName>
            <fullName evidence="1">D-glycero-beta-D-manno-heptose 1-phosphate adenylyltransferase</fullName>
        </alternativeName>
    </domain>
</protein>